<proteinExistence type="evidence at protein level"/>
<dbReference type="ConoServer" id="1512">
    <property type="toxin name" value="QcVIA"/>
</dbReference>
<dbReference type="GO" id="GO:0005576">
    <property type="term" value="C:extracellular region"/>
    <property type="evidence" value="ECO:0007669"/>
    <property type="project" value="UniProtKB-SubCell"/>
</dbReference>
<dbReference type="GO" id="GO:0090729">
    <property type="term" value="F:toxin activity"/>
    <property type="evidence" value="ECO:0007669"/>
    <property type="project" value="UniProtKB-KW"/>
</dbReference>
<comment type="function">
    <text>Causes scratching and restlessness in mice.</text>
</comment>
<comment type="subcellular location">
    <subcellularLocation>
        <location>Secreted</location>
    </subcellularLocation>
</comment>
<comment type="tissue specificity">
    <text>Expressed by the venom duct.</text>
</comment>
<comment type="domain">
    <text>The cysteine framework is VI/VII (C-C-CC-C-C).</text>
</comment>
<comment type="domain">
    <text evidence="2">Displays a mini-granulin fold, a structure composed of two short, stacked beta-hairpins connected by two parallel disulfide bonds. This newly described fold is derived from the same cysteine connectivity as knottins (ICK fold). The name 'mini-granulin fold' comes from the structural homology with the N-terminal region of the human granulin.</text>
</comment>
<comment type="miscellaneous">
    <text>The order of the last three amino acids has not yet been definitively established.</text>
</comment>
<feature type="peptide" id="PRO_0000044486" description="Conotoxin QcVIA">
    <location>
        <begin position="1"/>
        <end position="25"/>
    </location>
</feature>
<feature type="modified residue" description="4-hydroxyproline" evidence="3">
    <location>
        <position position="5"/>
    </location>
</feature>
<feature type="disulfide bond" evidence="1">
    <location>
        <begin position="4"/>
        <end position="12"/>
    </location>
</feature>
<feature type="disulfide bond" evidence="1">
    <location>
        <begin position="7"/>
        <end position="17"/>
    </location>
</feature>
<feature type="disulfide bond" evidence="1">
    <location>
        <begin position="11"/>
        <end position="22"/>
    </location>
</feature>
<feature type="unsure residue">
    <location>
        <begin position="23"/>
        <end position="25"/>
    </location>
</feature>
<evidence type="ECO:0000250" key="1"/>
<evidence type="ECO:0000250" key="2">
    <source>
        <dbReference type="UniProtKB" id="P0DPM3"/>
    </source>
</evidence>
<evidence type="ECO:0000269" key="3">
    <source>
    </source>
</evidence>
<name>U6AA_CONQU</name>
<reference key="1">
    <citation type="journal article" date="1990" name="Science">
        <title>Diversity of Conus neuropeptides.</title>
        <authorList>
            <person name="Olivera B.M."/>
            <person name="Rivier J."/>
            <person name="Clark C."/>
            <person name="Ramilo C.A."/>
            <person name="Corpuz G.P."/>
            <person name="Abogadie F.C."/>
            <person name="Mena E.E."/>
            <person name="Woodward S.R."/>
            <person name="Hillyard D.R."/>
            <person name="Cruz L.J."/>
        </authorList>
    </citation>
    <scope>PROTEIN SEQUENCE</scope>
    <scope>HYDROXYLATION AT PRO-5</scope>
</reference>
<protein>
    <recommendedName>
        <fullName>Conotoxin QcVIA</fullName>
    </recommendedName>
</protein>
<keyword id="KW-0903">Direct protein sequencing</keyword>
<keyword id="KW-1015">Disulfide bond</keyword>
<keyword id="KW-0379">Hydroxylation</keyword>
<keyword id="KW-0960">Knottin</keyword>
<keyword id="KW-0528">Neurotoxin</keyword>
<keyword id="KW-0964">Secreted</keyword>
<keyword id="KW-0800">Toxin</keyword>
<accession>P58843</accession>
<organism>
    <name type="scientific">Conus quercinus</name>
    <name type="common">Oak cone</name>
    <dbReference type="NCBI Taxonomy" id="101313"/>
    <lineage>
        <taxon>Eukaryota</taxon>
        <taxon>Metazoa</taxon>
        <taxon>Spiralia</taxon>
        <taxon>Lophotrochozoa</taxon>
        <taxon>Mollusca</taxon>
        <taxon>Gastropoda</taxon>
        <taxon>Caenogastropoda</taxon>
        <taxon>Neogastropoda</taxon>
        <taxon>Conoidea</taxon>
        <taxon>Conidae</taxon>
        <taxon>Conus</taxon>
        <taxon>Lividoconus</taxon>
    </lineage>
</organism>
<sequence>DQSCPWCGFTCCLPNYCQGLTCTVI</sequence>